<organism>
    <name type="scientific">Bacillus cereus</name>
    <dbReference type="NCBI Taxonomy" id="1396"/>
    <lineage>
        <taxon>Bacteria</taxon>
        <taxon>Bacillati</taxon>
        <taxon>Bacillota</taxon>
        <taxon>Bacilli</taxon>
        <taxon>Bacillales</taxon>
        <taxon>Bacillaceae</taxon>
        <taxon>Bacillus</taxon>
        <taxon>Bacillus cereus group</taxon>
    </lineage>
</organism>
<dbReference type="EMBL" id="X93042">
    <property type="protein sequence ID" value="CAA63610.1"/>
    <property type="molecule type" value="Genomic_DNA"/>
</dbReference>
<dbReference type="RefSeq" id="WP_001193051.1">
    <property type="nucleotide sequence ID" value="NZ_VOVB01000046.1"/>
</dbReference>
<dbReference type="SMR" id="Q45099"/>
<dbReference type="GeneID" id="66265576"/>
<dbReference type="eggNOG" id="COG1278">
    <property type="taxonomic scope" value="Bacteria"/>
</dbReference>
<dbReference type="GO" id="GO:0005737">
    <property type="term" value="C:cytoplasm"/>
    <property type="evidence" value="ECO:0007669"/>
    <property type="project" value="UniProtKB-SubCell"/>
</dbReference>
<dbReference type="GO" id="GO:0003677">
    <property type="term" value="F:DNA binding"/>
    <property type="evidence" value="ECO:0007669"/>
    <property type="project" value="UniProtKB-KW"/>
</dbReference>
<dbReference type="CDD" id="cd04458">
    <property type="entry name" value="CSP_CDS"/>
    <property type="match status" value="1"/>
</dbReference>
<dbReference type="FunFam" id="2.40.50.140:FF:000006">
    <property type="entry name" value="Cold shock protein CspC"/>
    <property type="match status" value="1"/>
</dbReference>
<dbReference type="Gene3D" id="6.20.370.130">
    <property type="match status" value="1"/>
</dbReference>
<dbReference type="Gene3D" id="2.40.50.140">
    <property type="entry name" value="Nucleic acid-binding proteins"/>
    <property type="match status" value="1"/>
</dbReference>
<dbReference type="InterPro" id="IPR012156">
    <property type="entry name" value="Cold_shock_CspA"/>
</dbReference>
<dbReference type="InterPro" id="IPR050181">
    <property type="entry name" value="Cold_shock_domain"/>
</dbReference>
<dbReference type="InterPro" id="IPR011129">
    <property type="entry name" value="CSD"/>
</dbReference>
<dbReference type="InterPro" id="IPR019844">
    <property type="entry name" value="CSD_CS"/>
</dbReference>
<dbReference type="InterPro" id="IPR002059">
    <property type="entry name" value="CSP_DNA-bd"/>
</dbReference>
<dbReference type="InterPro" id="IPR012340">
    <property type="entry name" value="NA-bd_OB-fold"/>
</dbReference>
<dbReference type="PANTHER" id="PTHR11544">
    <property type="entry name" value="COLD SHOCK DOMAIN CONTAINING PROTEINS"/>
    <property type="match status" value="1"/>
</dbReference>
<dbReference type="Pfam" id="PF00313">
    <property type="entry name" value="CSD"/>
    <property type="match status" value="1"/>
</dbReference>
<dbReference type="PIRSF" id="PIRSF002599">
    <property type="entry name" value="Cold_shock_A"/>
    <property type="match status" value="1"/>
</dbReference>
<dbReference type="PRINTS" id="PR00050">
    <property type="entry name" value="COLDSHOCK"/>
</dbReference>
<dbReference type="SMART" id="SM00357">
    <property type="entry name" value="CSP"/>
    <property type="match status" value="1"/>
</dbReference>
<dbReference type="SUPFAM" id="SSF50249">
    <property type="entry name" value="Nucleic acid-binding proteins"/>
    <property type="match status" value="1"/>
</dbReference>
<dbReference type="PROSITE" id="PS00352">
    <property type="entry name" value="CSD_1"/>
    <property type="match status" value="1"/>
</dbReference>
<dbReference type="PROSITE" id="PS51857">
    <property type="entry name" value="CSD_2"/>
    <property type="match status" value="1"/>
</dbReference>
<gene>
    <name type="primary">cspD</name>
</gene>
<feature type="chain" id="PRO_0000100289" description="Cold shock-like protein CspD">
    <location>
        <begin position="1"/>
        <end position="66"/>
    </location>
</feature>
<feature type="domain" description="CSD">
    <location>
        <begin position="4"/>
        <end position="63"/>
    </location>
</feature>
<keyword id="KW-0010">Activator</keyword>
<keyword id="KW-0963">Cytoplasm</keyword>
<keyword id="KW-0903">Direct protein sequencing</keyword>
<keyword id="KW-0238">DNA-binding</keyword>
<keyword id="KW-0804">Transcription</keyword>
<keyword id="KW-0805">Transcription regulation</keyword>
<accession>Q45099</accession>
<evidence type="ECO:0000305" key="1"/>
<name>CSPD_BACCE</name>
<proteinExistence type="evidence at protein level"/>
<protein>
    <recommendedName>
        <fullName>Cold shock-like protein CspD</fullName>
    </recommendedName>
</protein>
<sequence>MQTGKVKWFNGEKGFGFIEVEGGEDVFVHFSAIQGDGFKTLEEGQEVSFEIVDGNRGPQAANVTKN</sequence>
<comment type="subunit">
    <text evidence="1">Homodimer.</text>
</comment>
<comment type="subcellular location">
    <subcellularLocation>
        <location>Cytoplasm</location>
    </subcellularLocation>
</comment>
<comment type="induction">
    <text evidence="1">Not induced by cold-shock.</text>
</comment>
<reference key="1">
    <citation type="journal article" date="1996" name="J. Bacteriol.">
        <title>Identification and purification of a family of dimeric major cold shock protein homologs from the psychrotrophic Bacillus cereus WSBC 10201.</title>
        <authorList>
            <person name="Mayr B."/>
            <person name="Kaplan T."/>
            <person name="Lechner S."/>
            <person name="Scherer S."/>
        </authorList>
    </citation>
    <scope>NUCLEOTIDE SEQUENCE [GENOMIC DNA]</scope>
    <scope>PROTEIN SEQUENCE OF 1-6</scope>
    <source>
        <strain>WSBC 10201</strain>
    </source>
</reference>